<organism>
    <name type="scientific">Shewanella amazonensis (strain ATCC BAA-1098 / SB2B)</name>
    <dbReference type="NCBI Taxonomy" id="326297"/>
    <lineage>
        <taxon>Bacteria</taxon>
        <taxon>Pseudomonadati</taxon>
        <taxon>Pseudomonadota</taxon>
        <taxon>Gammaproteobacteria</taxon>
        <taxon>Alteromonadales</taxon>
        <taxon>Shewanellaceae</taxon>
        <taxon>Shewanella</taxon>
    </lineage>
</organism>
<gene>
    <name evidence="1" type="primary">folD</name>
    <name type="ordered locus">Sama_1222</name>
</gene>
<comment type="function">
    <text evidence="1">Catalyzes the oxidation of 5,10-methylenetetrahydrofolate to 5,10-methenyltetrahydrofolate and then the hydrolysis of 5,10-methenyltetrahydrofolate to 10-formyltetrahydrofolate.</text>
</comment>
<comment type="catalytic activity">
    <reaction evidence="1">
        <text>(6R)-5,10-methylene-5,6,7,8-tetrahydrofolate + NADP(+) = (6R)-5,10-methenyltetrahydrofolate + NADPH</text>
        <dbReference type="Rhea" id="RHEA:22812"/>
        <dbReference type="ChEBI" id="CHEBI:15636"/>
        <dbReference type="ChEBI" id="CHEBI:57455"/>
        <dbReference type="ChEBI" id="CHEBI:57783"/>
        <dbReference type="ChEBI" id="CHEBI:58349"/>
        <dbReference type="EC" id="1.5.1.5"/>
    </reaction>
</comment>
<comment type="catalytic activity">
    <reaction evidence="1">
        <text>(6R)-5,10-methenyltetrahydrofolate + H2O = (6R)-10-formyltetrahydrofolate + H(+)</text>
        <dbReference type="Rhea" id="RHEA:23700"/>
        <dbReference type="ChEBI" id="CHEBI:15377"/>
        <dbReference type="ChEBI" id="CHEBI:15378"/>
        <dbReference type="ChEBI" id="CHEBI:57455"/>
        <dbReference type="ChEBI" id="CHEBI:195366"/>
        <dbReference type="EC" id="3.5.4.9"/>
    </reaction>
</comment>
<comment type="pathway">
    <text evidence="1">One-carbon metabolism; tetrahydrofolate interconversion.</text>
</comment>
<comment type="subunit">
    <text evidence="1">Homodimer.</text>
</comment>
<comment type="similarity">
    <text evidence="1">Belongs to the tetrahydrofolate dehydrogenase/cyclohydrolase family.</text>
</comment>
<proteinExistence type="inferred from homology"/>
<reference key="1">
    <citation type="submission" date="2006-12" db="EMBL/GenBank/DDBJ databases">
        <title>Complete sequence of Shewanella amazonensis SB2B.</title>
        <authorList>
            <consortium name="US DOE Joint Genome Institute"/>
            <person name="Copeland A."/>
            <person name="Lucas S."/>
            <person name="Lapidus A."/>
            <person name="Barry K."/>
            <person name="Detter J.C."/>
            <person name="Glavina del Rio T."/>
            <person name="Hammon N."/>
            <person name="Israni S."/>
            <person name="Dalin E."/>
            <person name="Tice H."/>
            <person name="Pitluck S."/>
            <person name="Munk A.C."/>
            <person name="Brettin T."/>
            <person name="Bruce D."/>
            <person name="Han C."/>
            <person name="Tapia R."/>
            <person name="Gilna P."/>
            <person name="Schmutz J."/>
            <person name="Larimer F."/>
            <person name="Land M."/>
            <person name="Hauser L."/>
            <person name="Kyrpides N."/>
            <person name="Mikhailova N."/>
            <person name="Fredrickson J."/>
            <person name="Richardson P."/>
        </authorList>
    </citation>
    <scope>NUCLEOTIDE SEQUENCE [LARGE SCALE GENOMIC DNA]</scope>
    <source>
        <strain>ATCC BAA-1098 / SB2B</strain>
    </source>
</reference>
<evidence type="ECO:0000255" key="1">
    <source>
        <dbReference type="HAMAP-Rule" id="MF_01576"/>
    </source>
</evidence>
<protein>
    <recommendedName>
        <fullName evidence="1">Bifunctional protein FolD</fullName>
    </recommendedName>
    <domain>
        <recommendedName>
            <fullName evidence="1">Methylenetetrahydrofolate dehydrogenase</fullName>
            <ecNumber evidence="1">1.5.1.5</ecNumber>
        </recommendedName>
    </domain>
    <domain>
        <recommendedName>
            <fullName evidence="1">Methenyltetrahydrofolate cyclohydrolase</fullName>
            <ecNumber evidence="1">3.5.4.9</ecNumber>
        </recommendedName>
    </domain>
</protein>
<keyword id="KW-0028">Amino-acid biosynthesis</keyword>
<keyword id="KW-0368">Histidine biosynthesis</keyword>
<keyword id="KW-0378">Hydrolase</keyword>
<keyword id="KW-0486">Methionine biosynthesis</keyword>
<keyword id="KW-0511">Multifunctional enzyme</keyword>
<keyword id="KW-0521">NADP</keyword>
<keyword id="KW-0554">One-carbon metabolism</keyword>
<keyword id="KW-0560">Oxidoreductase</keyword>
<keyword id="KW-0658">Purine biosynthesis</keyword>
<keyword id="KW-1185">Reference proteome</keyword>
<dbReference type="EC" id="1.5.1.5" evidence="1"/>
<dbReference type="EC" id="3.5.4.9" evidence="1"/>
<dbReference type="EMBL" id="CP000507">
    <property type="protein sequence ID" value="ABL99429.1"/>
    <property type="molecule type" value="Genomic_DNA"/>
</dbReference>
<dbReference type="RefSeq" id="WP_011759338.1">
    <property type="nucleotide sequence ID" value="NC_008700.1"/>
</dbReference>
<dbReference type="SMR" id="A1S4X3"/>
<dbReference type="STRING" id="326297.Sama_1222"/>
<dbReference type="KEGG" id="saz:Sama_1222"/>
<dbReference type="eggNOG" id="COG0190">
    <property type="taxonomic scope" value="Bacteria"/>
</dbReference>
<dbReference type="HOGENOM" id="CLU_034045_2_1_6"/>
<dbReference type="OrthoDB" id="9803580at2"/>
<dbReference type="UniPathway" id="UPA00193"/>
<dbReference type="Proteomes" id="UP000009175">
    <property type="component" value="Chromosome"/>
</dbReference>
<dbReference type="GO" id="GO:0005829">
    <property type="term" value="C:cytosol"/>
    <property type="evidence" value="ECO:0007669"/>
    <property type="project" value="TreeGrafter"/>
</dbReference>
<dbReference type="GO" id="GO:0004477">
    <property type="term" value="F:methenyltetrahydrofolate cyclohydrolase activity"/>
    <property type="evidence" value="ECO:0007669"/>
    <property type="project" value="UniProtKB-UniRule"/>
</dbReference>
<dbReference type="GO" id="GO:0004488">
    <property type="term" value="F:methylenetetrahydrofolate dehydrogenase (NADP+) activity"/>
    <property type="evidence" value="ECO:0007669"/>
    <property type="project" value="UniProtKB-UniRule"/>
</dbReference>
<dbReference type="GO" id="GO:0000105">
    <property type="term" value="P:L-histidine biosynthetic process"/>
    <property type="evidence" value="ECO:0007669"/>
    <property type="project" value="UniProtKB-KW"/>
</dbReference>
<dbReference type="GO" id="GO:0009086">
    <property type="term" value="P:methionine biosynthetic process"/>
    <property type="evidence" value="ECO:0007669"/>
    <property type="project" value="UniProtKB-KW"/>
</dbReference>
<dbReference type="GO" id="GO:0006164">
    <property type="term" value="P:purine nucleotide biosynthetic process"/>
    <property type="evidence" value="ECO:0007669"/>
    <property type="project" value="UniProtKB-KW"/>
</dbReference>
<dbReference type="GO" id="GO:0035999">
    <property type="term" value="P:tetrahydrofolate interconversion"/>
    <property type="evidence" value="ECO:0007669"/>
    <property type="project" value="UniProtKB-UniRule"/>
</dbReference>
<dbReference type="CDD" id="cd01080">
    <property type="entry name" value="NAD_bind_m-THF_DH_Cyclohyd"/>
    <property type="match status" value="1"/>
</dbReference>
<dbReference type="FunFam" id="3.40.50.10860:FF:000001">
    <property type="entry name" value="Bifunctional protein FolD"/>
    <property type="match status" value="1"/>
</dbReference>
<dbReference type="FunFam" id="3.40.50.720:FF:000006">
    <property type="entry name" value="Bifunctional protein FolD"/>
    <property type="match status" value="1"/>
</dbReference>
<dbReference type="Gene3D" id="3.40.50.10860">
    <property type="entry name" value="Leucine Dehydrogenase, chain A, domain 1"/>
    <property type="match status" value="1"/>
</dbReference>
<dbReference type="Gene3D" id="3.40.50.720">
    <property type="entry name" value="NAD(P)-binding Rossmann-like Domain"/>
    <property type="match status" value="1"/>
</dbReference>
<dbReference type="HAMAP" id="MF_01576">
    <property type="entry name" value="THF_DHG_CYH"/>
    <property type="match status" value="1"/>
</dbReference>
<dbReference type="InterPro" id="IPR046346">
    <property type="entry name" value="Aminoacid_DH-like_N_sf"/>
</dbReference>
<dbReference type="InterPro" id="IPR036291">
    <property type="entry name" value="NAD(P)-bd_dom_sf"/>
</dbReference>
<dbReference type="InterPro" id="IPR000672">
    <property type="entry name" value="THF_DH/CycHdrlase"/>
</dbReference>
<dbReference type="InterPro" id="IPR020630">
    <property type="entry name" value="THF_DH/CycHdrlase_cat_dom"/>
</dbReference>
<dbReference type="InterPro" id="IPR020867">
    <property type="entry name" value="THF_DH/CycHdrlase_CS"/>
</dbReference>
<dbReference type="InterPro" id="IPR020631">
    <property type="entry name" value="THF_DH/CycHdrlase_NAD-bd_dom"/>
</dbReference>
<dbReference type="NCBIfam" id="NF008058">
    <property type="entry name" value="PRK10792.1"/>
    <property type="match status" value="1"/>
</dbReference>
<dbReference type="NCBIfam" id="NF010783">
    <property type="entry name" value="PRK14186.1"/>
    <property type="match status" value="1"/>
</dbReference>
<dbReference type="PANTHER" id="PTHR48099:SF5">
    <property type="entry name" value="C-1-TETRAHYDROFOLATE SYNTHASE, CYTOPLASMIC"/>
    <property type="match status" value="1"/>
</dbReference>
<dbReference type="PANTHER" id="PTHR48099">
    <property type="entry name" value="C-1-TETRAHYDROFOLATE SYNTHASE, CYTOPLASMIC-RELATED"/>
    <property type="match status" value="1"/>
</dbReference>
<dbReference type="Pfam" id="PF00763">
    <property type="entry name" value="THF_DHG_CYH"/>
    <property type="match status" value="1"/>
</dbReference>
<dbReference type="Pfam" id="PF02882">
    <property type="entry name" value="THF_DHG_CYH_C"/>
    <property type="match status" value="1"/>
</dbReference>
<dbReference type="PRINTS" id="PR00085">
    <property type="entry name" value="THFDHDRGNASE"/>
</dbReference>
<dbReference type="SUPFAM" id="SSF53223">
    <property type="entry name" value="Aminoacid dehydrogenase-like, N-terminal domain"/>
    <property type="match status" value="1"/>
</dbReference>
<dbReference type="SUPFAM" id="SSF51735">
    <property type="entry name" value="NAD(P)-binding Rossmann-fold domains"/>
    <property type="match status" value="1"/>
</dbReference>
<dbReference type="PROSITE" id="PS00767">
    <property type="entry name" value="THF_DHG_CYH_2"/>
    <property type="match status" value="1"/>
</dbReference>
<feature type="chain" id="PRO_0000305876" description="Bifunctional protein FolD">
    <location>
        <begin position="1"/>
        <end position="284"/>
    </location>
</feature>
<feature type="binding site" evidence="1">
    <location>
        <begin position="166"/>
        <end position="168"/>
    </location>
    <ligand>
        <name>NADP(+)</name>
        <dbReference type="ChEBI" id="CHEBI:58349"/>
    </ligand>
</feature>
<feature type="binding site" evidence="1">
    <location>
        <position position="232"/>
    </location>
    <ligand>
        <name>NADP(+)</name>
        <dbReference type="ChEBI" id="CHEBI:58349"/>
    </ligand>
</feature>
<accession>A1S4X3</accession>
<name>FOLD_SHEAM</name>
<sequence length="284" mass="30561">MTAQNIDGKAIARAIRTTLSDKVKARKEAGQRIPGLAVILVGLDPASQVYVGSKRKACEEVGFLSQSFDLPDTTSEDDLLALIDRCNEDPAIDGILVQLPLPAHIDSSKVIERIRPDKDVDGFHPYNVGRLAQRIPVLRSCTPMGIMTLIRSTGVDTYGLDAVVVGASNIVGRPMTLELLLAGCTTTTCHRFTKNLEDKVRQADLLVVAVGKPHFIPGDWIKPGAIVIDVGINRLDDGRLVGDVEFDVAAERAAFITPVPGGVGPMTIASLLENTLYAAENYHD</sequence>